<protein>
    <recommendedName>
        <fullName evidence="1">DNA primase</fullName>
        <ecNumber evidence="1">2.7.7.101</ecNumber>
    </recommendedName>
</protein>
<organism>
    <name type="scientific">Enterococcus faecalis (strain ATCC 700802 / V583)</name>
    <dbReference type="NCBI Taxonomy" id="226185"/>
    <lineage>
        <taxon>Bacteria</taxon>
        <taxon>Bacillati</taxon>
        <taxon>Bacillota</taxon>
        <taxon>Bacilli</taxon>
        <taxon>Lactobacillales</taxon>
        <taxon>Enterococcaceae</taxon>
        <taxon>Enterococcus</taxon>
    </lineage>
</organism>
<comment type="function">
    <text evidence="1">RNA polymerase that catalyzes the synthesis of short RNA molecules used as primers for DNA polymerase during DNA replication.</text>
</comment>
<comment type="catalytic activity">
    <reaction evidence="1">
        <text>ssDNA + n NTP = ssDNA/pppN(pN)n-1 hybrid + (n-1) diphosphate.</text>
        <dbReference type="EC" id="2.7.7.101"/>
    </reaction>
</comment>
<comment type="cofactor">
    <cofactor evidence="1">
        <name>Zn(2+)</name>
        <dbReference type="ChEBI" id="CHEBI:29105"/>
    </cofactor>
    <text evidence="1">Binds 1 zinc ion per monomer.</text>
</comment>
<comment type="cofactor">
    <cofactor evidence="1">
        <name>Mg(2+)</name>
        <dbReference type="ChEBI" id="CHEBI:18420"/>
    </cofactor>
    <text evidence="1">Binds two Mg(2+) per subunit.</text>
</comment>
<comment type="subunit">
    <text evidence="1">Monomer. Interacts with DnaB.</text>
</comment>
<comment type="domain">
    <text evidence="1">Contains an N-terminal zinc-binding domain, a central core domain that contains the primase activity, and a C-terminal DnaB-binding domain.</text>
</comment>
<comment type="similarity">
    <text evidence="1">Belongs to the DnaG primase family.</text>
</comment>
<keyword id="KW-0235">DNA replication</keyword>
<keyword id="KW-0238">DNA-binding</keyword>
<keyword id="KW-0240">DNA-directed RNA polymerase</keyword>
<keyword id="KW-0460">Magnesium</keyword>
<keyword id="KW-0479">Metal-binding</keyword>
<keyword id="KW-0548">Nucleotidyltransferase</keyword>
<keyword id="KW-0639">Primosome</keyword>
<keyword id="KW-1185">Reference proteome</keyword>
<keyword id="KW-0804">Transcription</keyword>
<keyword id="KW-0808">Transferase</keyword>
<keyword id="KW-0862">Zinc</keyword>
<keyword id="KW-0863">Zinc-finger</keyword>
<evidence type="ECO:0000255" key="1">
    <source>
        <dbReference type="HAMAP-Rule" id="MF_00974"/>
    </source>
</evidence>
<evidence type="ECO:0000305" key="2"/>
<accession>P52308</accession>
<gene>
    <name evidence="1" type="primary">dnaG</name>
    <name type="synonym">dnaE</name>
    <name type="ordered locus">EF_1521</name>
</gene>
<feature type="chain" id="PRO_0000180493" description="DNA primase">
    <location>
        <begin position="1"/>
        <end position="628"/>
    </location>
</feature>
<feature type="domain" description="Toprim" evidence="1">
    <location>
        <begin position="269"/>
        <end position="351"/>
    </location>
</feature>
<feature type="zinc finger region" description="CHC2-type" evidence="1">
    <location>
        <begin position="40"/>
        <end position="64"/>
    </location>
</feature>
<feature type="binding site" evidence="1">
    <location>
        <position position="275"/>
    </location>
    <ligand>
        <name>Mg(2+)</name>
        <dbReference type="ChEBI" id="CHEBI:18420"/>
        <label>1</label>
        <note>catalytic</note>
    </ligand>
</feature>
<feature type="binding site" evidence="1">
    <location>
        <position position="319"/>
    </location>
    <ligand>
        <name>Mg(2+)</name>
        <dbReference type="ChEBI" id="CHEBI:18420"/>
        <label>1</label>
        <note>catalytic</note>
    </ligand>
</feature>
<feature type="binding site" evidence="1">
    <location>
        <position position="319"/>
    </location>
    <ligand>
        <name>Mg(2+)</name>
        <dbReference type="ChEBI" id="CHEBI:18420"/>
        <label>2</label>
    </ligand>
</feature>
<feature type="binding site" evidence="1">
    <location>
        <position position="321"/>
    </location>
    <ligand>
        <name>Mg(2+)</name>
        <dbReference type="ChEBI" id="CHEBI:18420"/>
        <label>2</label>
    </ligand>
</feature>
<feature type="sequence conflict" description="In Ref. 2; CAA60112." evidence="2" ref="2">
    <original>I</original>
    <variation>V</variation>
    <location>
        <position position="507"/>
    </location>
</feature>
<reference key="1">
    <citation type="journal article" date="2003" name="Science">
        <title>Role of mobile DNA in the evolution of vancomycin-resistant Enterococcus faecalis.</title>
        <authorList>
            <person name="Paulsen I.T."/>
            <person name="Banerjei L."/>
            <person name="Myers G.S.A."/>
            <person name="Nelson K.E."/>
            <person name="Seshadri R."/>
            <person name="Read T.D."/>
            <person name="Fouts D.E."/>
            <person name="Eisen J.A."/>
            <person name="Gill S.R."/>
            <person name="Heidelberg J.F."/>
            <person name="Tettelin H."/>
            <person name="Dodson R.J."/>
            <person name="Umayam L.A."/>
            <person name="Brinkac L.M."/>
            <person name="Beanan M.J."/>
            <person name="Daugherty S.C."/>
            <person name="DeBoy R.T."/>
            <person name="Durkin S.A."/>
            <person name="Kolonay J.F."/>
            <person name="Madupu R."/>
            <person name="Nelson W.C."/>
            <person name="Vamathevan J.J."/>
            <person name="Tran B."/>
            <person name="Upton J."/>
            <person name="Hansen T."/>
            <person name="Shetty J."/>
            <person name="Khouri H.M."/>
            <person name="Utterback T.R."/>
            <person name="Radune D."/>
            <person name="Ketchum K.A."/>
            <person name="Dougherty B.A."/>
            <person name="Fraser C.M."/>
        </authorList>
    </citation>
    <scope>NUCLEOTIDE SEQUENCE [LARGE SCALE GENOMIC DNA]</scope>
    <source>
        <strain>ATCC 700802 / V583</strain>
    </source>
</reference>
<reference key="2">
    <citation type="journal article" date="1996" name="J. Basic Microbiol.">
        <title>Molecular analysis of the rpoD gene of Enterococcus faecalis.</title>
        <authorList>
            <person name="Frere J."/>
            <person name="Gansel X."/>
            <person name="Benachour A."/>
            <person name="Auffray Y."/>
        </authorList>
    </citation>
    <scope>NUCLEOTIDE SEQUENCE [GENOMIC DNA] OF 365-628</scope>
    <source>
        <strain>ATCC 19433 / DSM 20478 / JCM 8726 / NBRC 100481 / NCIMB 775</strain>
    </source>
</reference>
<sequence>MAQRIPQEVIEEVRHRTNIVDIIGQYVQLKKSGKNYMGLCPFHEERSPSFSVAEDKQIFHCFGCGKGGTVFNFLQEIEGISFPESVKRVADLEHLSVDFDWSEPREVADTPENQQRRSLLQLHSKAAELYHHILVNTKIGEPALNYLLERGLTQELIETFQIGFAPQKRDFLSQVFKNEQLDETLFEPSGLFVQRDNGTFLDRFYQRIMFPINDPQGNVIAFSGRLLKTADFPGDEMPKYLNSPETTLFNKRETLFNFDRARKEIRKENTVLLFEGFMDVIAAWQSGVKSGVASMGTSLTNEQIRRLERVAKEVVICYDGDNAGVQATNRAIQLLQENSHFDLSIVSIPEKLDPDEYVRKYGAEAFQNLANHGRETVFSFKMNYHRLTRNMNNEKEQLDYVNELLRELTNVQSPLERDRYLNQIAQEFQLSVHSLEEQFNQLKQEQRSVQRQERQQFYQDEMMPPPMEEPVFEENHVQNKLPLTQVQKAERSLLFRLMNEQGVRQTIQQLPDFSFAHDEYQELYFLLESYATLHQSFDIADFINFLQDNQTKQLAIEIAYQNLSEESSEREVADLLHVIALSSIAEAIEQKKIQQQEAKRVGNQQLEAELTMEIIQLARQLKAQRTFT</sequence>
<dbReference type="EC" id="2.7.7.101" evidence="1"/>
<dbReference type="EMBL" id="AE016830">
    <property type="protein sequence ID" value="AAO81310.1"/>
    <property type="molecule type" value="Genomic_DNA"/>
</dbReference>
<dbReference type="EMBL" id="X86176">
    <property type="protein sequence ID" value="CAA60112.1"/>
    <property type="molecule type" value="Genomic_DNA"/>
</dbReference>
<dbReference type="PIR" id="S54113">
    <property type="entry name" value="S54113"/>
</dbReference>
<dbReference type="RefSeq" id="NP_815240.1">
    <property type="nucleotide sequence ID" value="NC_004668.1"/>
</dbReference>
<dbReference type="RefSeq" id="WP_002361790.1">
    <property type="nucleotide sequence ID" value="NZ_KE136528.1"/>
</dbReference>
<dbReference type="SMR" id="P52308"/>
<dbReference type="STRING" id="226185.EF_1521"/>
<dbReference type="EnsemblBacteria" id="AAO81310">
    <property type="protein sequence ID" value="AAO81310"/>
    <property type="gene ID" value="EF_1521"/>
</dbReference>
<dbReference type="KEGG" id="efa:EF1521"/>
<dbReference type="PATRIC" id="fig|226185.45.peg.1981"/>
<dbReference type="eggNOG" id="COG0358">
    <property type="taxonomic scope" value="Bacteria"/>
</dbReference>
<dbReference type="HOGENOM" id="CLU_013501_3_3_9"/>
<dbReference type="Proteomes" id="UP000001415">
    <property type="component" value="Chromosome"/>
</dbReference>
<dbReference type="GO" id="GO:0005737">
    <property type="term" value="C:cytoplasm"/>
    <property type="evidence" value="ECO:0007669"/>
    <property type="project" value="TreeGrafter"/>
</dbReference>
<dbReference type="GO" id="GO:0000428">
    <property type="term" value="C:DNA-directed RNA polymerase complex"/>
    <property type="evidence" value="ECO:0007669"/>
    <property type="project" value="UniProtKB-KW"/>
</dbReference>
<dbReference type="GO" id="GO:1990077">
    <property type="term" value="C:primosome complex"/>
    <property type="evidence" value="ECO:0007669"/>
    <property type="project" value="UniProtKB-KW"/>
</dbReference>
<dbReference type="GO" id="GO:0003677">
    <property type="term" value="F:DNA binding"/>
    <property type="evidence" value="ECO:0007669"/>
    <property type="project" value="UniProtKB-KW"/>
</dbReference>
<dbReference type="GO" id="GO:0003899">
    <property type="term" value="F:DNA-directed RNA polymerase activity"/>
    <property type="evidence" value="ECO:0007669"/>
    <property type="project" value="InterPro"/>
</dbReference>
<dbReference type="GO" id="GO:0008270">
    <property type="term" value="F:zinc ion binding"/>
    <property type="evidence" value="ECO:0007669"/>
    <property type="project" value="UniProtKB-UniRule"/>
</dbReference>
<dbReference type="GO" id="GO:0006269">
    <property type="term" value="P:DNA replication, synthesis of primer"/>
    <property type="evidence" value="ECO:0007669"/>
    <property type="project" value="UniProtKB-UniRule"/>
</dbReference>
<dbReference type="CDD" id="cd03364">
    <property type="entry name" value="TOPRIM_DnaG_primases"/>
    <property type="match status" value="1"/>
</dbReference>
<dbReference type="FunFam" id="3.40.1360.10:FF:000002">
    <property type="entry name" value="DNA primase"/>
    <property type="match status" value="1"/>
</dbReference>
<dbReference type="FunFam" id="3.90.580.10:FF:000001">
    <property type="entry name" value="DNA primase"/>
    <property type="match status" value="1"/>
</dbReference>
<dbReference type="FunFam" id="3.90.980.10:FF:000001">
    <property type="entry name" value="DNA primase"/>
    <property type="match status" value="1"/>
</dbReference>
<dbReference type="Gene3D" id="3.40.1360.10">
    <property type="match status" value="1"/>
</dbReference>
<dbReference type="Gene3D" id="3.90.980.10">
    <property type="entry name" value="DNA primase, catalytic core, N-terminal domain"/>
    <property type="match status" value="1"/>
</dbReference>
<dbReference type="Gene3D" id="1.10.860.10">
    <property type="entry name" value="DNAb Helicase, Chain A"/>
    <property type="match status" value="1"/>
</dbReference>
<dbReference type="Gene3D" id="3.90.580.10">
    <property type="entry name" value="Zinc finger, CHC2-type domain"/>
    <property type="match status" value="1"/>
</dbReference>
<dbReference type="HAMAP" id="MF_00974">
    <property type="entry name" value="DNA_primase_DnaG"/>
    <property type="match status" value="1"/>
</dbReference>
<dbReference type="InterPro" id="IPR016136">
    <property type="entry name" value="DNA_helicase_N/primase_C"/>
</dbReference>
<dbReference type="InterPro" id="IPR037068">
    <property type="entry name" value="DNA_primase_core_N_sf"/>
</dbReference>
<dbReference type="InterPro" id="IPR019475">
    <property type="entry name" value="DNA_primase_DnaB-bd"/>
</dbReference>
<dbReference type="InterPro" id="IPR006295">
    <property type="entry name" value="DNA_primase_DnaG"/>
</dbReference>
<dbReference type="InterPro" id="IPR036977">
    <property type="entry name" value="DNA_primase_Znf_CHC2"/>
</dbReference>
<dbReference type="InterPro" id="IPR030846">
    <property type="entry name" value="DnaG_bac"/>
</dbReference>
<dbReference type="InterPro" id="IPR013264">
    <property type="entry name" value="DNAG_N"/>
</dbReference>
<dbReference type="InterPro" id="IPR050219">
    <property type="entry name" value="DnaG_primase"/>
</dbReference>
<dbReference type="InterPro" id="IPR034151">
    <property type="entry name" value="TOPRIM_DnaG_bac"/>
</dbReference>
<dbReference type="InterPro" id="IPR006171">
    <property type="entry name" value="TOPRIM_dom"/>
</dbReference>
<dbReference type="InterPro" id="IPR002694">
    <property type="entry name" value="Znf_CHC2"/>
</dbReference>
<dbReference type="NCBIfam" id="TIGR01391">
    <property type="entry name" value="dnaG"/>
    <property type="match status" value="1"/>
</dbReference>
<dbReference type="PANTHER" id="PTHR30313">
    <property type="entry name" value="DNA PRIMASE"/>
    <property type="match status" value="1"/>
</dbReference>
<dbReference type="PANTHER" id="PTHR30313:SF2">
    <property type="entry name" value="DNA PRIMASE"/>
    <property type="match status" value="1"/>
</dbReference>
<dbReference type="Pfam" id="PF10410">
    <property type="entry name" value="DnaB_bind"/>
    <property type="match status" value="1"/>
</dbReference>
<dbReference type="Pfam" id="PF08275">
    <property type="entry name" value="DNAG_N"/>
    <property type="match status" value="1"/>
</dbReference>
<dbReference type="Pfam" id="PF13155">
    <property type="entry name" value="Toprim_2"/>
    <property type="match status" value="1"/>
</dbReference>
<dbReference type="Pfam" id="PF01807">
    <property type="entry name" value="Zn_ribbon_DnaG"/>
    <property type="match status" value="1"/>
</dbReference>
<dbReference type="PIRSF" id="PIRSF002811">
    <property type="entry name" value="DnaG"/>
    <property type="match status" value="1"/>
</dbReference>
<dbReference type="SMART" id="SM00493">
    <property type="entry name" value="TOPRIM"/>
    <property type="match status" value="1"/>
</dbReference>
<dbReference type="SMART" id="SM00400">
    <property type="entry name" value="ZnF_CHCC"/>
    <property type="match status" value="1"/>
</dbReference>
<dbReference type="SUPFAM" id="SSF56731">
    <property type="entry name" value="DNA primase core"/>
    <property type="match status" value="1"/>
</dbReference>
<dbReference type="SUPFAM" id="SSF57783">
    <property type="entry name" value="Zinc beta-ribbon"/>
    <property type="match status" value="1"/>
</dbReference>
<dbReference type="PROSITE" id="PS50880">
    <property type="entry name" value="TOPRIM"/>
    <property type="match status" value="1"/>
</dbReference>
<name>DNAG_ENTFA</name>
<proteinExistence type="inferred from homology"/>